<gene>
    <name type="primary">CDA4</name>
    <name type="synonym">DESH</name>
    <name type="ordered locus">At4g29650</name>
    <name type="ORF">T16L4.160</name>
</gene>
<dbReference type="EMBL" id="AF121877">
    <property type="protein sequence ID" value="AAD30448.1"/>
    <property type="molecule type" value="Genomic_DNA"/>
</dbReference>
<dbReference type="EMBL" id="AF080676">
    <property type="protein sequence ID" value="AAC69570.1"/>
    <property type="molecule type" value="Genomic_DNA"/>
</dbReference>
<dbReference type="EMBL" id="AL079344">
    <property type="protein sequence ID" value="CAB45325.1"/>
    <property type="molecule type" value="Genomic_DNA"/>
</dbReference>
<dbReference type="EMBL" id="AL161575">
    <property type="protein sequence ID" value="CAB79723.1"/>
    <property type="molecule type" value="Genomic_DNA"/>
</dbReference>
<dbReference type="EMBL" id="CP002687">
    <property type="protein sequence ID" value="AEE85655.1"/>
    <property type="molecule type" value="Genomic_DNA"/>
</dbReference>
<dbReference type="EMBL" id="DQ056663">
    <property type="protein sequence ID" value="AAY78810.1"/>
    <property type="molecule type" value="mRNA"/>
</dbReference>
<dbReference type="PIR" id="T09928">
    <property type="entry name" value="T09928"/>
</dbReference>
<dbReference type="RefSeq" id="NP_194694.1">
    <property type="nucleotide sequence ID" value="NM_119110.2"/>
</dbReference>
<dbReference type="SMR" id="Q9S7S2"/>
<dbReference type="FunCoup" id="Q9S7S2">
    <property type="interactions" value="44"/>
</dbReference>
<dbReference type="STRING" id="3702.Q9S7S2"/>
<dbReference type="iPTMnet" id="Q9S7S2"/>
<dbReference type="PaxDb" id="3702-AT4G29650.1"/>
<dbReference type="EnsemblPlants" id="AT4G29650.1">
    <property type="protein sequence ID" value="AT4G29650.1"/>
    <property type="gene ID" value="AT4G29650"/>
</dbReference>
<dbReference type="GeneID" id="829086"/>
<dbReference type="Gramene" id="AT4G29650.1">
    <property type="protein sequence ID" value="AT4G29650.1"/>
    <property type="gene ID" value="AT4G29650"/>
</dbReference>
<dbReference type="KEGG" id="ath:AT4G29650"/>
<dbReference type="Araport" id="AT4G29650"/>
<dbReference type="TAIR" id="AT4G29650"/>
<dbReference type="eggNOG" id="KOG0833">
    <property type="taxonomic scope" value="Eukaryota"/>
</dbReference>
<dbReference type="HOGENOM" id="CLU_052424_1_0_1"/>
<dbReference type="InParanoid" id="Q9S7S2"/>
<dbReference type="OMA" id="GWCIESA"/>
<dbReference type="PhylomeDB" id="Q9S7S2"/>
<dbReference type="BioCyc" id="ARA:AT4G29650-MONOMER"/>
<dbReference type="PRO" id="PR:Q9S7S2"/>
<dbReference type="Proteomes" id="UP000006548">
    <property type="component" value="Chromosome 4"/>
</dbReference>
<dbReference type="ExpressionAtlas" id="Q9S7S2">
    <property type="expression patterns" value="baseline and differential"/>
</dbReference>
<dbReference type="GO" id="GO:0004126">
    <property type="term" value="F:cytidine deaminase activity"/>
    <property type="evidence" value="ECO:0007669"/>
    <property type="project" value="InterPro"/>
</dbReference>
<dbReference type="GO" id="GO:0008270">
    <property type="term" value="F:zinc ion binding"/>
    <property type="evidence" value="ECO:0007669"/>
    <property type="project" value="InterPro"/>
</dbReference>
<dbReference type="GO" id="GO:0009972">
    <property type="term" value="P:cytidine deamination"/>
    <property type="evidence" value="ECO:0007669"/>
    <property type="project" value="InterPro"/>
</dbReference>
<dbReference type="FunFam" id="3.40.140.10:FF:000006">
    <property type="entry name" value="Cytidine deaminase"/>
    <property type="match status" value="1"/>
</dbReference>
<dbReference type="Gene3D" id="3.40.140.10">
    <property type="entry name" value="Cytidine Deaminase, domain 2"/>
    <property type="match status" value="2"/>
</dbReference>
<dbReference type="InterPro" id="IPR002125">
    <property type="entry name" value="CMP_dCMP_dom"/>
</dbReference>
<dbReference type="InterPro" id="IPR013171">
    <property type="entry name" value="Cyd/dCyd_deaminase_Zn-bd"/>
</dbReference>
<dbReference type="InterPro" id="IPR050202">
    <property type="entry name" value="Cyt/Deoxycyt_deaminase"/>
</dbReference>
<dbReference type="InterPro" id="IPR016193">
    <property type="entry name" value="Cytidine_deaminase-like"/>
</dbReference>
<dbReference type="PANTHER" id="PTHR11644">
    <property type="entry name" value="CYTIDINE DEAMINASE"/>
    <property type="match status" value="1"/>
</dbReference>
<dbReference type="PANTHER" id="PTHR11644:SF2">
    <property type="entry name" value="CYTIDINE DEAMINASE"/>
    <property type="match status" value="1"/>
</dbReference>
<dbReference type="Pfam" id="PF08211">
    <property type="entry name" value="dCMP_cyt_deam_2"/>
    <property type="match status" value="1"/>
</dbReference>
<dbReference type="PIRSF" id="PIRSF006334">
    <property type="entry name" value="Cdd_plus_pseudo"/>
    <property type="match status" value="1"/>
</dbReference>
<dbReference type="SUPFAM" id="SSF53927">
    <property type="entry name" value="Cytidine deaminase-like"/>
    <property type="match status" value="2"/>
</dbReference>
<dbReference type="PROSITE" id="PS51747">
    <property type="entry name" value="CYT_DCMP_DEAMINASES_2"/>
    <property type="match status" value="1"/>
</dbReference>
<comment type="subunit">
    <text evidence="1">Homodimer.</text>
</comment>
<comment type="similarity">
    <text evidence="3">Belongs to the cytidine and deoxycytidylate deaminase family.</text>
</comment>
<comment type="caution">
    <text evidence="3">Lacks part of the deaminase domain and the catalytically essential zinc-binding residues. It is therefore most likely inactive.</text>
</comment>
<evidence type="ECO:0000250" key="1"/>
<evidence type="ECO:0000255" key="2">
    <source>
        <dbReference type="PROSITE-ProRule" id="PRU01083"/>
    </source>
</evidence>
<evidence type="ECO:0000305" key="3"/>
<feature type="chain" id="PRO_0000429146" description="Probable inactive cytidine deaminase 4">
    <location>
        <begin position="1"/>
        <end position="251"/>
    </location>
</feature>
<feature type="domain" description="CMP/dCMP-type deaminase" evidence="2">
    <location>
        <begin position="136"/>
        <end position="251"/>
    </location>
</feature>
<feature type="active site" description="Proton donor" evidence="1">
    <location>
        <position position="76"/>
    </location>
</feature>
<feature type="binding site" evidence="1">
    <location>
        <begin position="61"/>
        <end position="63"/>
    </location>
    <ligand>
        <name>substrate</name>
    </ligand>
</feature>
<feature type="sequence conflict" description="In Ref. 2; AAC69570." evidence="3" ref="2">
    <original>N</original>
    <variation>Y</variation>
    <location>
        <position position="153"/>
    </location>
</feature>
<feature type="sequence conflict" description="In Ref. 2; AAC69570." evidence="3" ref="2">
    <original>MA</original>
    <variation>IV</variation>
    <location>
        <begin position="197"/>
        <end position="198"/>
    </location>
</feature>
<name>CDA4_ARATH</name>
<sequence length="251" mass="27226">MTQQLKFILTREEAASKGVSRPSDLVKLEEEAMILARAPISGVQDAVLGLASSDRIFLGVNVEFEGLPLHHSISAEQFLVANLALNFEQELHACLIPSRFYLESFEEDVPLLLVPQNNRLAHSDPFSAAEICSNPEHCSHLKCRALTAANKSNAQYSKCPSGVALICEGEVYGGWCIESAAYNLSLGPVQAALVDFMARGEGKGFEMITGAVLVEMNDAKVSQEATARILLKTIAPGCNFSVFRCHKTAEN</sequence>
<organism>
    <name type="scientific">Arabidopsis thaliana</name>
    <name type="common">Mouse-ear cress</name>
    <dbReference type="NCBI Taxonomy" id="3702"/>
    <lineage>
        <taxon>Eukaryota</taxon>
        <taxon>Viridiplantae</taxon>
        <taxon>Streptophyta</taxon>
        <taxon>Embryophyta</taxon>
        <taxon>Tracheophyta</taxon>
        <taxon>Spermatophyta</taxon>
        <taxon>Magnoliopsida</taxon>
        <taxon>eudicotyledons</taxon>
        <taxon>Gunneridae</taxon>
        <taxon>Pentapetalae</taxon>
        <taxon>rosids</taxon>
        <taxon>malvids</taxon>
        <taxon>Brassicales</taxon>
        <taxon>Brassicaceae</taxon>
        <taxon>Camelineae</taxon>
        <taxon>Arabidopsis</taxon>
    </lineage>
</organism>
<reference key="1">
    <citation type="submission" date="1999-01" db="EMBL/GenBank/DDBJ databases">
        <title>Cytidine deaminases in Arabidopsis thaliana: a gene family of eight members are located within a 24 kb region.</title>
        <authorList>
            <person name="Sanchez H."/>
            <person name="Schuster W."/>
        </authorList>
    </citation>
    <scope>NUCLEOTIDE SEQUENCE [GENOMIC DNA]</scope>
    <source>
        <strain>cv. Columbia</strain>
    </source>
</reference>
<reference key="2">
    <citation type="submission" date="1999-06" db="EMBL/GenBank/DDBJ databases">
        <title>Cloning and characterisation of a cytidine deaminase gene family from Arabidopsis thaliana.</title>
        <authorList>
            <person name="Faivre-Nitschke S.E."/>
            <person name="Grienenberger J.M."/>
            <person name="Gualberto J.M."/>
        </authorList>
    </citation>
    <scope>NUCLEOTIDE SEQUENCE [GENOMIC DNA]</scope>
    <source>
        <strain>cv. Landsberg erecta</strain>
    </source>
</reference>
<reference key="3">
    <citation type="journal article" date="1999" name="Nature">
        <title>Sequence and analysis of chromosome 4 of the plant Arabidopsis thaliana.</title>
        <authorList>
            <person name="Mayer K.F.X."/>
            <person name="Schueller C."/>
            <person name="Wambutt R."/>
            <person name="Murphy G."/>
            <person name="Volckaert G."/>
            <person name="Pohl T."/>
            <person name="Duesterhoeft A."/>
            <person name="Stiekema W."/>
            <person name="Entian K.-D."/>
            <person name="Terryn N."/>
            <person name="Harris B."/>
            <person name="Ansorge W."/>
            <person name="Brandt P."/>
            <person name="Grivell L.A."/>
            <person name="Rieger M."/>
            <person name="Weichselgartner M."/>
            <person name="de Simone V."/>
            <person name="Obermaier B."/>
            <person name="Mache R."/>
            <person name="Mueller M."/>
            <person name="Kreis M."/>
            <person name="Delseny M."/>
            <person name="Puigdomenech P."/>
            <person name="Watson M."/>
            <person name="Schmidtheini T."/>
            <person name="Reichert B."/>
            <person name="Portetelle D."/>
            <person name="Perez-Alonso M."/>
            <person name="Boutry M."/>
            <person name="Bancroft I."/>
            <person name="Vos P."/>
            <person name="Hoheisel J."/>
            <person name="Zimmermann W."/>
            <person name="Wedler H."/>
            <person name="Ridley P."/>
            <person name="Langham S.-A."/>
            <person name="McCullagh B."/>
            <person name="Bilham L."/>
            <person name="Robben J."/>
            <person name="van der Schueren J."/>
            <person name="Grymonprez B."/>
            <person name="Chuang Y.-J."/>
            <person name="Vandenbussche F."/>
            <person name="Braeken M."/>
            <person name="Weltjens I."/>
            <person name="Voet M."/>
            <person name="Bastiaens I."/>
            <person name="Aert R."/>
            <person name="Defoor E."/>
            <person name="Weitzenegger T."/>
            <person name="Bothe G."/>
            <person name="Ramsperger U."/>
            <person name="Hilbert H."/>
            <person name="Braun M."/>
            <person name="Holzer E."/>
            <person name="Brandt A."/>
            <person name="Peters S."/>
            <person name="van Staveren M."/>
            <person name="Dirkse W."/>
            <person name="Mooijman P."/>
            <person name="Klein Lankhorst R."/>
            <person name="Rose M."/>
            <person name="Hauf J."/>
            <person name="Koetter P."/>
            <person name="Berneiser S."/>
            <person name="Hempel S."/>
            <person name="Feldpausch M."/>
            <person name="Lamberth S."/>
            <person name="Van den Daele H."/>
            <person name="De Keyser A."/>
            <person name="Buysshaert C."/>
            <person name="Gielen J."/>
            <person name="Villarroel R."/>
            <person name="De Clercq R."/>
            <person name="van Montagu M."/>
            <person name="Rogers J."/>
            <person name="Cronin A."/>
            <person name="Quail M.A."/>
            <person name="Bray-Allen S."/>
            <person name="Clark L."/>
            <person name="Doggett J."/>
            <person name="Hall S."/>
            <person name="Kay M."/>
            <person name="Lennard N."/>
            <person name="McLay K."/>
            <person name="Mayes R."/>
            <person name="Pettett A."/>
            <person name="Rajandream M.A."/>
            <person name="Lyne M."/>
            <person name="Benes V."/>
            <person name="Rechmann S."/>
            <person name="Borkova D."/>
            <person name="Bloecker H."/>
            <person name="Scharfe M."/>
            <person name="Grimm M."/>
            <person name="Loehnert T.-H."/>
            <person name="Dose S."/>
            <person name="de Haan M."/>
            <person name="Maarse A.C."/>
            <person name="Schaefer M."/>
            <person name="Mueller-Auer S."/>
            <person name="Gabel C."/>
            <person name="Fuchs M."/>
            <person name="Fartmann B."/>
            <person name="Granderath K."/>
            <person name="Dauner D."/>
            <person name="Herzl A."/>
            <person name="Neumann S."/>
            <person name="Argiriou A."/>
            <person name="Vitale D."/>
            <person name="Liguori R."/>
            <person name="Piravandi E."/>
            <person name="Massenet O."/>
            <person name="Quigley F."/>
            <person name="Clabauld G."/>
            <person name="Muendlein A."/>
            <person name="Felber R."/>
            <person name="Schnabl S."/>
            <person name="Hiller R."/>
            <person name="Schmidt W."/>
            <person name="Lecharny A."/>
            <person name="Aubourg S."/>
            <person name="Chefdor F."/>
            <person name="Cooke R."/>
            <person name="Berger C."/>
            <person name="Monfort A."/>
            <person name="Casacuberta E."/>
            <person name="Gibbons T."/>
            <person name="Weber N."/>
            <person name="Vandenbol M."/>
            <person name="Bargues M."/>
            <person name="Terol J."/>
            <person name="Torres A."/>
            <person name="Perez-Perez A."/>
            <person name="Purnelle B."/>
            <person name="Bent E."/>
            <person name="Johnson S."/>
            <person name="Tacon D."/>
            <person name="Jesse T."/>
            <person name="Heijnen L."/>
            <person name="Schwarz S."/>
            <person name="Scholler P."/>
            <person name="Heber S."/>
            <person name="Francs P."/>
            <person name="Bielke C."/>
            <person name="Frishman D."/>
            <person name="Haase D."/>
            <person name="Lemcke K."/>
            <person name="Mewes H.-W."/>
            <person name="Stocker S."/>
            <person name="Zaccaria P."/>
            <person name="Bevan M."/>
            <person name="Wilson R.K."/>
            <person name="de la Bastide M."/>
            <person name="Habermann K."/>
            <person name="Parnell L."/>
            <person name="Dedhia N."/>
            <person name="Gnoj L."/>
            <person name="Schutz K."/>
            <person name="Huang E."/>
            <person name="Spiegel L."/>
            <person name="Sekhon M."/>
            <person name="Murray J."/>
            <person name="Sheet P."/>
            <person name="Cordes M."/>
            <person name="Abu-Threideh J."/>
            <person name="Stoneking T."/>
            <person name="Kalicki J."/>
            <person name="Graves T."/>
            <person name="Harmon G."/>
            <person name="Edwards J."/>
            <person name="Latreille P."/>
            <person name="Courtney L."/>
            <person name="Cloud J."/>
            <person name="Abbott A."/>
            <person name="Scott K."/>
            <person name="Johnson D."/>
            <person name="Minx P."/>
            <person name="Bentley D."/>
            <person name="Fulton B."/>
            <person name="Miller N."/>
            <person name="Greco T."/>
            <person name="Kemp K."/>
            <person name="Kramer J."/>
            <person name="Fulton L."/>
            <person name="Mardis E."/>
            <person name="Dante M."/>
            <person name="Pepin K."/>
            <person name="Hillier L.W."/>
            <person name="Nelson J."/>
            <person name="Spieth J."/>
            <person name="Ryan E."/>
            <person name="Andrews S."/>
            <person name="Geisel C."/>
            <person name="Layman D."/>
            <person name="Du H."/>
            <person name="Ali J."/>
            <person name="Berghoff A."/>
            <person name="Jones K."/>
            <person name="Drone K."/>
            <person name="Cotton M."/>
            <person name="Joshu C."/>
            <person name="Antonoiu B."/>
            <person name="Zidanic M."/>
            <person name="Strong C."/>
            <person name="Sun H."/>
            <person name="Lamar B."/>
            <person name="Yordan C."/>
            <person name="Ma P."/>
            <person name="Zhong J."/>
            <person name="Preston R."/>
            <person name="Vil D."/>
            <person name="Shekher M."/>
            <person name="Matero A."/>
            <person name="Shah R."/>
            <person name="Swaby I.K."/>
            <person name="O'Shaughnessy A."/>
            <person name="Rodriguez M."/>
            <person name="Hoffman J."/>
            <person name="Till S."/>
            <person name="Granat S."/>
            <person name="Shohdy N."/>
            <person name="Hasegawa A."/>
            <person name="Hameed A."/>
            <person name="Lodhi M."/>
            <person name="Johnson A."/>
            <person name="Chen E."/>
            <person name="Marra M.A."/>
            <person name="Martienssen R."/>
            <person name="McCombie W.R."/>
        </authorList>
    </citation>
    <scope>NUCLEOTIDE SEQUENCE [LARGE SCALE GENOMIC DNA]</scope>
    <source>
        <strain>cv. Columbia</strain>
    </source>
</reference>
<reference key="4">
    <citation type="journal article" date="2017" name="Plant J.">
        <title>Araport11: a complete reannotation of the Arabidopsis thaliana reference genome.</title>
        <authorList>
            <person name="Cheng C.Y."/>
            <person name="Krishnakumar V."/>
            <person name="Chan A.P."/>
            <person name="Thibaud-Nissen F."/>
            <person name="Schobel S."/>
            <person name="Town C.D."/>
        </authorList>
    </citation>
    <scope>GENOME REANNOTATION</scope>
    <source>
        <strain>cv. Columbia</strain>
    </source>
</reference>
<reference key="5">
    <citation type="journal article" date="2006" name="Plant Biotechnol. J.">
        <title>Simultaneous high-throughput recombinational cloning of open reading frames in closed and open configurations.</title>
        <authorList>
            <person name="Underwood B.A."/>
            <person name="Vanderhaeghen R."/>
            <person name="Whitford R."/>
            <person name="Town C.D."/>
            <person name="Hilson P."/>
        </authorList>
    </citation>
    <scope>NUCLEOTIDE SEQUENCE [LARGE SCALE MRNA]</scope>
    <source>
        <strain>cv. Columbia</strain>
    </source>
</reference>
<accession>Q9S7S2</accession>
<accession>Q9ZT31</accession>
<keyword id="KW-1185">Reference proteome</keyword>
<protein>
    <recommendedName>
        <fullName>Probable inactive cytidine deaminase 4</fullName>
    </recommendedName>
</protein>
<proteinExistence type="evidence at transcript level"/>